<comment type="function">
    <text evidence="3 4 5 7 10">Transcriptional activator involved in the hypoxic stress response (PubMed:20113439, PubMed:21398256, PubMed:21615413, PubMed:24728113, PubMed:32977426). Acts as a transcriptional activator via the cis-acting element GCC box (PubMed:24728113, PubMed:32977426). Plays a role in low oxygen signaling and contributes to tolerance to anoxia stress by enhancing anaerobic gene expression and ethanolic fermentation (PubMed:20113439, PubMed:21398256). Invovlved in the modulation of ethylene responses under both normoxia and hypoxia (PubMed:21398256).</text>
</comment>
<comment type="function">
    <molecule>Isoform 1</molecule>
    <text evidence="10">Is mostly responsible for transactivation of hypoxia-responsive genes.</text>
</comment>
<comment type="function">
    <molecule>Isoform 2</molecule>
    <text evidence="7">Involved in root development through the regulation of root meristem cell division (PubMed:24728113). Does not act as a transcriptional activator via the cis-acting CRT/DRE element (PubMed:24728113).</text>
</comment>
<comment type="interaction">
    <interactant intactId="EBI-4475239">
        <id>Q8H0T5</id>
    </interactant>
    <interactant intactId="EBI-4453230">
        <id>O80902</id>
        <label>CIPK22</label>
    </interactant>
    <organismsDiffer>false</organismsDiffer>
    <experiments>4</experiments>
</comment>
<comment type="subcellular location">
    <subcellularLocation>
        <location evidence="1 3">Nucleus</location>
    </subcellularLocation>
</comment>
<comment type="subcellular location">
    <molecule>Isoform 2</molecule>
    <subcellularLocation>
        <location evidence="7">Nucleus</location>
    </subcellularLocation>
</comment>
<comment type="alternative products">
    <event type="alternative splicing"/>
    <isoform>
        <id>Q8H0T5-1</id>
        <name>1</name>
        <name evidence="15">HRE1-beta</name>
        <sequence type="displayed"/>
    </isoform>
    <isoform>
        <id>Q8H0T5-2</id>
        <name>2</name>
        <name evidence="15">HRE1-alpha</name>
        <sequence type="described" ref="VSP_061101"/>
    </isoform>
</comment>
<comment type="tissue specificity">
    <text evidence="10">Expressed in roots and at lower levels in shoots.</text>
</comment>
<comment type="tissue specificity">
    <molecule>Isoform 2</molecule>
    <text evidence="7">Highly expressed in roots and leaf trichomes (PubMed:24728113). Expressed in rosette leaves, stems, cauline leaves and flowers (PubMed:24728113).</text>
</comment>
<comment type="induction">
    <text evidence="3 4 5 6 7 8 9 10">Induced under hypoxic conditions in roots (PubMed:20113439, PubMed:21398256, PubMed:21615413, PubMed:24395201, PubMed:24728113, PubMed:32977426). Induced during hypoxia under nitrate nutrition (PubMed:30535180). Induced by ethylene (PubMed:21398256, PubMed:28698356). Induced by hydrogen peroxide (PubMed:24395201).</text>
</comment>
<comment type="PTM">
    <text evidence="17">In presence of oxygen, the N-terminal cysteine residue (Cys-2) of ERF73 can be oxidized by cysteine oxidases, thus preparing the protein for N-end rule pathway-mediated proteasomal degradation (Probable). Under low oxygen levels, Cys oxidation is prevented, ERF73 is stabilized and confers tolerance to hypoxia (Probable).</text>
</comment>
<comment type="miscellaneous">
    <text evidence="4 10">Seedlings silencing ERF73 exhibit reduced elongation of the primary root (PubMed:21398256). Seedlings overexpressing ERF73 exhibit increased elongation of the primary root (PubMed:32977426). Plants overexpressing ERF73 exhibit increased tolerance to hypoxia treatment (PubMed:32977426).</text>
</comment>
<comment type="miscellaneous">
    <molecule>Isoform 2</molecule>
    <text evidence="7">Plants overexpressing ERF73 exhibit increase tolerance to submergence.</text>
</comment>
<comment type="similarity">
    <text evidence="16">Belongs to the AP2/ERF transcription factor family. ERF subfamily.</text>
</comment>
<evidence type="ECO:0000255" key="1">
    <source>
        <dbReference type="PROSITE-ProRule" id="PRU00366"/>
    </source>
</evidence>
<evidence type="ECO:0000256" key="2">
    <source>
        <dbReference type="SAM" id="MobiDB-lite"/>
    </source>
</evidence>
<evidence type="ECO:0000269" key="3">
    <source>
    </source>
</evidence>
<evidence type="ECO:0000269" key="4">
    <source>
    </source>
</evidence>
<evidence type="ECO:0000269" key="5">
    <source>
    </source>
</evidence>
<evidence type="ECO:0000269" key="6">
    <source>
    </source>
</evidence>
<evidence type="ECO:0000269" key="7">
    <source>
    </source>
</evidence>
<evidence type="ECO:0000269" key="8">
    <source>
    </source>
</evidence>
<evidence type="ECO:0000269" key="9">
    <source>
    </source>
</evidence>
<evidence type="ECO:0000269" key="10">
    <source>
    </source>
</evidence>
<evidence type="ECO:0000303" key="11">
    <source>
    </source>
</evidence>
<evidence type="ECO:0000303" key="12">
    <source>
    </source>
</evidence>
<evidence type="ECO:0000303" key="13">
    <source>
    </source>
</evidence>
<evidence type="ECO:0000303" key="14">
    <source>
    </source>
</evidence>
<evidence type="ECO:0000303" key="15">
    <source>
    </source>
</evidence>
<evidence type="ECO:0000305" key="16"/>
<evidence type="ECO:0000305" key="17">
    <source>
    </source>
</evidence>
<evidence type="ECO:0000312" key="18">
    <source>
        <dbReference type="Araport" id="AT1G72360"/>
    </source>
</evidence>
<evidence type="ECO:0000312" key="19">
    <source>
        <dbReference type="EMBL" id="AAG52589.1"/>
    </source>
</evidence>
<keyword id="KW-0010">Activator</keyword>
<keyword id="KW-0025">Alternative splicing</keyword>
<keyword id="KW-0238">DNA-binding</keyword>
<keyword id="KW-0936">Ethylene signaling pathway</keyword>
<keyword id="KW-0539">Nucleus</keyword>
<keyword id="KW-0558">Oxidation</keyword>
<keyword id="KW-1185">Reference proteome</keyword>
<keyword id="KW-0346">Stress response</keyword>
<keyword id="KW-0804">Transcription</keyword>
<keyword id="KW-0805">Transcription regulation</keyword>
<dbReference type="EMBL" id="AC016529">
    <property type="protein sequence ID" value="AAG52589.1"/>
    <property type="molecule type" value="Genomic_DNA"/>
</dbReference>
<dbReference type="EMBL" id="CP002684">
    <property type="protein sequence ID" value="AEE35310.1"/>
    <property type="molecule type" value="Genomic_DNA"/>
</dbReference>
<dbReference type="EMBL" id="CP002684">
    <property type="protein sequence ID" value="AEE35311.1"/>
    <property type="molecule type" value="Genomic_DNA"/>
</dbReference>
<dbReference type="EMBL" id="BT002063">
    <property type="protein sequence ID" value="AAN72074.1"/>
    <property type="molecule type" value="mRNA"/>
</dbReference>
<dbReference type="EMBL" id="BT006259">
    <property type="protein sequence ID" value="AAP13367.1"/>
    <property type="molecule type" value="mRNA"/>
</dbReference>
<dbReference type="PIR" id="E96747">
    <property type="entry name" value="E96747"/>
</dbReference>
<dbReference type="RefSeq" id="NP_001077812.1">
    <molecule id="Q8H0T5-1"/>
    <property type="nucleotide sequence ID" value="NM_001084343.2"/>
</dbReference>
<dbReference type="RefSeq" id="NP_177380.2">
    <molecule id="Q8H0T5-2"/>
    <property type="nucleotide sequence ID" value="NM_105895.2"/>
</dbReference>
<dbReference type="SMR" id="Q8H0T5"/>
<dbReference type="BioGRID" id="28788">
    <property type="interactions" value="1"/>
</dbReference>
<dbReference type="IntAct" id="Q8H0T5">
    <property type="interactions" value="1"/>
</dbReference>
<dbReference type="STRING" id="3702.Q8H0T5"/>
<dbReference type="PaxDb" id="3702-AT1G72360.2"/>
<dbReference type="EnsemblPlants" id="AT1G72360.1">
    <molecule id="Q8H0T5-2"/>
    <property type="protein sequence ID" value="AT1G72360.1"/>
    <property type="gene ID" value="AT1G72360"/>
</dbReference>
<dbReference type="EnsemblPlants" id="AT1G72360.2">
    <molecule id="Q8H0T5-1"/>
    <property type="protein sequence ID" value="AT1G72360.2"/>
    <property type="gene ID" value="AT1G72360"/>
</dbReference>
<dbReference type="GeneID" id="843568"/>
<dbReference type="Gramene" id="AT1G72360.1">
    <molecule id="Q8H0T5-2"/>
    <property type="protein sequence ID" value="AT1G72360.1"/>
    <property type="gene ID" value="AT1G72360"/>
</dbReference>
<dbReference type="Gramene" id="AT1G72360.2">
    <molecule id="Q8H0T5-1"/>
    <property type="protein sequence ID" value="AT1G72360.2"/>
    <property type="gene ID" value="AT1G72360"/>
</dbReference>
<dbReference type="KEGG" id="ath:AT1G72360"/>
<dbReference type="Araport" id="AT1G72360"/>
<dbReference type="TAIR" id="AT1G72360">
    <property type="gene designation" value="ERF73"/>
</dbReference>
<dbReference type="eggNOG" id="ENOG502QV26">
    <property type="taxonomic scope" value="Eukaryota"/>
</dbReference>
<dbReference type="HOGENOM" id="CLU_054468_2_1_1"/>
<dbReference type="InParanoid" id="Q8H0T5"/>
<dbReference type="OrthoDB" id="1930411at2759"/>
<dbReference type="PhylomeDB" id="Q8H0T5"/>
<dbReference type="PRO" id="PR:Q8H0T5"/>
<dbReference type="Proteomes" id="UP000006548">
    <property type="component" value="Chromosome 1"/>
</dbReference>
<dbReference type="ExpressionAtlas" id="Q8H0T5">
    <property type="expression patterns" value="baseline and differential"/>
</dbReference>
<dbReference type="GO" id="GO:0005634">
    <property type="term" value="C:nucleus"/>
    <property type="evidence" value="ECO:0000314"/>
    <property type="project" value="UniProtKB"/>
</dbReference>
<dbReference type="GO" id="GO:0003700">
    <property type="term" value="F:DNA-binding transcription factor activity"/>
    <property type="evidence" value="ECO:0000250"/>
    <property type="project" value="TAIR"/>
</dbReference>
<dbReference type="GO" id="GO:0043565">
    <property type="term" value="F:sequence-specific DNA binding"/>
    <property type="evidence" value="ECO:0000314"/>
    <property type="project" value="UniProtKB"/>
</dbReference>
<dbReference type="GO" id="GO:0000976">
    <property type="term" value="F:transcription cis-regulatory region binding"/>
    <property type="evidence" value="ECO:0000353"/>
    <property type="project" value="TAIR"/>
</dbReference>
<dbReference type="GO" id="GO:0071454">
    <property type="term" value="P:cellular response to anoxia"/>
    <property type="evidence" value="ECO:0000315"/>
    <property type="project" value="UniProtKB"/>
</dbReference>
<dbReference type="GO" id="GO:0071369">
    <property type="term" value="P:cellular response to ethylene stimulus"/>
    <property type="evidence" value="ECO:0000315"/>
    <property type="project" value="UniProtKB"/>
</dbReference>
<dbReference type="GO" id="GO:0071456">
    <property type="term" value="P:cellular response to hypoxia"/>
    <property type="evidence" value="ECO:0000315"/>
    <property type="project" value="UniProtKB"/>
</dbReference>
<dbReference type="GO" id="GO:0009873">
    <property type="term" value="P:ethylene-activated signaling pathway"/>
    <property type="evidence" value="ECO:0000315"/>
    <property type="project" value="TAIR"/>
</dbReference>
<dbReference type="GO" id="GO:0045893">
    <property type="term" value="P:positive regulation of DNA-templated transcription"/>
    <property type="evidence" value="ECO:0000314"/>
    <property type="project" value="UniProtKB"/>
</dbReference>
<dbReference type="GO" id="GO:0006355">
    <property type="term" value="P:regulation of DNA-templated transcription"/>
    <property type="evidence" value="ECO:0000314"/>
    <property type="project" value="TAIR"/>
</dbReference>
<dbReference type="GO" id="GO:0034059">
    <property type="term" value="P:response to anoxia"/>
    <property type="evidence" value="ECO:0000316"/>
    <property type="project" value="TAIR"/>
</dbReference>
<dbReference type="GO" id="GO:0009723">
    <property type="term" value="P:response to ethylene"/>
    <property type="evidence" value="ECO:0000270"/>
    <property type="project" value="TAIR"/>
</dbReference>
<dbReference type="GO" id="GO:0001666">
    <property type="term" value="P:response to hypoxia"/>
    <property type="evidence" value="ECO:0000270"/>
    <property type="project" value="TAIR"/>
</dbReference>
<dbReference type="CDD" id="cd00018">
    <property type="entry name" value="AP2"/>
    <property type="match status" value="1"/>
</dbReference>
<dbReference type="FunFam" id="3.30.730.10:FF:000001">
    <property type="entry name" value="Ethylene-responsive transcription factor 2"/>
    <property type="match status" value="1"/>
</dbReference>
<dbReference type="Gene3D" id="3.30.730.10">
    <property type="entry name" value="AP2/ERF domain"/>
    <property type="match status" value="1"/>
</dbReference>
<dbReference type="InterPro" id="IPR001471">
    <property type="entry name" value="AP2/ERF_dom"/>
</dbReference>
<dbReference type="InterPro" id="IPR036955">
    <property type="entry name" value="AP2/ERF_dom_sf"/>
</dbReference>
<dbReference type="InterPro" id="IPR016177">
    <property type="entry name" value="DNA-bd_dom_sf"/>
</dbReference>
<dbReference type="InterPro" id="IPR044808">
    <property type="entry name" value="ERF_plant"/>
</dbReference>
<dbReference type="PANTHER" id="PTHR31190">
    <property type="entry name" value="DNA-BINDING DOMAIN"/>
    <property type="match status" value="1"/>
</dbReference>
<dbReference type="PANTHER" id="PTHR31190:SF264">
    <property type="entry name" value="ETHYLENE-RESPONSIVE TRANSCRIPTION FACTOR ERF073"/>
    <property type="match status" value="1"/>
</dbReference>
<dbReference type="Pfam" id="PF00847">
    <property type="entry name" value="AP2"/>
    <property type="match status" value="1"/>
</dbReference>
<dbReference type="PRINTS" id="PR00367">
    <property type="entry name" value="ETHRSPELEMNT"/>
</dbReference>
<dbReference type="SMART" id="SM00380">
    <property type="entry name" value="AP2"/>
    <property type="match status" value="1"/>
</dbReference>
<dbReference type="SUPFAM" id="SSF54171">
    <property type="entry name" value="DNA-binding domain"/>
    <property type="match status" value="1"/>
</dbReference>
<dbReference type="PROSITE" id="PS51032">
    <property type="entry name" value="AP2_ERF"/>
    <property type="match status" value="1"/>
</dbReference>
<reference key="1">
    <citation type="journal article" date="2000" name="Nature">
        <title>Sequence and analysis of chromosome 1 of the plant Arabidopsis thaliana.</title>
        <authorList>
            <person name="Theologis A."/>
            <person name="Ecker J.R."/>
            <person name="Palm C.J."/>
            <person name="Federspiel N.A."/>
            <person name="Kaul S."/>
            <person name="White O."/>
            <person name="Alonso J."/>
            <person name="Altafi H."/>
            <person name="Araujo R."/>
            <person name="Bowman C.L."/>
            <person name="Brooks S.Y."/>
            <person name="Buehler E."/>
            <person name="Chan A."/>
            <person name="Chao Q."/>
            <person name="Chen H."/>
            <person name="Cheuk R.F."/>
            <person name="Chin C.W."/>
            <person name="Chung M.K."/>
            <person name="Conn L."/>
            <person name="Conway A.B."/>
            <person name="Conway A.R."/>
            <person name="Creasy T.H."/>
            <person name="Dewar K."/>
            <person name="Dunn P."/>
            <person name="Etgu P."/>
            <person name="Feldblyum T.V."/>
            <person name="Feng J.-D."/>
            <person name="Fong B."/>
            <person name="Fujii C.Y."/>
            <person name="Gill J.E."/>
            <person name="Goldsmith A.D."/>
            <person name="Haas B."/>
            <person name="Hansen N.F."/>
            <person name="Hughes B."/>
            <person name="Huizar L."/>
            <person name="Hunter J.L."/>
            <person name="Jenkins J."/>
            <person name="Johnson-Hopson C."/>
            <person name="Khan S."/>
            <person name="Khaykin E."/>
            <person name="Kim C.J."/>
            <person name="Koo H.L."/>
            <person name="Kremenetskaia I."/>
            <person name="Kurtz D.B."/>
            <person name="Kwan A."/>
            <person name="Lam B."/>
            <person name="Langin-Hooper S."/>
            <person name="Lee A."/>
            <person name="Lee J.M."/>
            <person name="Lenz C.A."/>
            <person name="Li J.H."/>
            <person name="Li Y.-P."/>
            <person name="Lin X."/>
            <person name="Liu S.X."/>
            <person name="Liu Z.A."/>
            <person name="Luros J.S."/>
            <person name="Maiti R."/>
            <person name="Marziali A."/>
            <person name="Militscher J."/>
            <person name="Miranda M."/>
            <person name="Nguyen M."/>
            <person name="Nierman W.C."/>
            <person name="Osborne B.I."/>
            <person name="Pai G."/>
            <person name="Peterson J."/>
            <person name="Pham P.K."/>
            <person name="Rizzo M."/>
            <person name="Rooney T."/>
            <person name="Rowley D."/>
            <person name="Sakano H."/>
            <person name="Salzberg S.L."/>
            <person name="Schwartz J.R."/>
            <person name="Shinn P."/>
            <person name="Southwick A.M."/>
            <person name="Sun H."/>
            <person name="Tallon L.J."/>
            <person name="Tambunga G."/>
            <person name="Toriumi M.J."/>
            <person name="Town C.D."/>
            <person name="Utterback T."/>
            <person name="Van Aken S."/>
            <person name="Vaysberg M."/>
            <person name="Vysotskaia V.S."/>
            <person name="Walker M."/>
            <person name="Wu D."/>
            <person name="Yu G."/>
            <person name="Fraser C.M."/>
            <person name="Venter J.C."/>
            <person name="Davis R.W."/>
        </authorList>
    </citation>
    <scope>NUCLEOTIDE SEQUENCE [LARGE SCALE GENOMIC DNA]</scope>
    <source>
        <strain>cv. Columbia</strain>
    </source>
</reference>
<reference key="2">
    <citation type="journal article" date="2017" name="Plant J.">
        <title>Araport11: a complete reannotation of the Arabidopsis thaliana reference genome.</title>
        <authorList>
            <person name="Cheng C.Y."/>
            <person name="Krishnakumar V."/>
            <person name="Chan A.P."/>
            <person name="Thibaud-Nissen F."/>
            <person name="Schobel S."/>
            <person name="Town C.D."/>
        </authorList>
    </citation>
    <scope>GENOME REANNOTATION</scope>
    <source>
        <strain>cv. Columbia</strain>
    </source>
</reference>
<reference key="3">
    <citation type="journal article" date="2003" name="Science">
        <title>Empirical analysis of transcriptional activity in the Arabidopsis genome.</title>
        <authorList>
            <person name="Yamada K."/>
            <person name="Lim J."/>
            <person name="Dale J.M."/>
            <person name="Chen H."/>
            <person name="Shinn P."/>
            <person name="Palm C.J."/>
            <person name="Southwick A.M."/>
            <person name="Wu H.C."/>
            <person name="Kim C.J."/>
            <person name="Nguyen M."/>
            <person name="Pham P.K."/>
            <person name="Cheuk R.F."/>
            <person name="Karlin-Newmann G."/>
            <person name="Liu S.X."/>
            <person name="Lam B."/>
            <person name="Sakano H."/>
            <person name="Wu T."/>
            <person name="Yu G."/>
            <person name="Miranda M."/>
            <person name="Quach H.L."/>
            <person name="Tripp M."/>
            <person name="Chang C.H."/>
            <person name="Lee J.M."/>
            <person name="Toriumi M.J."/>
            <person name="Chan M.M."/>
            <person name="Tang C.C."/>
            <person name="Onodera C.S."/>
            <person name="Deng J.M."/>
            <person name="Akiyama K."/>
            <person name="Ansari Y."/>
            <person name="Arakawa T."/>
            <person name="Banh J."/>
            <person name="Banno F."/>
            <person name="Bowser L."/>
            <person name="Brooks S.Y."/>
            <person name="Carninci P."/>
            <person name="Chao Q."/>
            <person name="Choy N."/>
            <person name="Enju A."/>
            <person name="Goldsmith A.D."/>
            <person name="Gurjal M."/>
            <person name="Hansen N.F."/>
            <person name="Hayashizaki Y."/>
            <person name="Johnson-Hopson C."/>
            <person name="Hsuan V.W."/>
            <person name="Iida K."/>
            <person name="Karnes M."/>
            <person name="Khan S."/>
            <person name="Koesema E."/>
            <person name="Ishida J."/>
            <person name="Jiang P.X."/>
            <person name="Jones T."/>
            <person name="Kawai J."/>
            <person name="Kamiya A."/>
            <person name="Meyers C."/>
            <person name="Nakajima M."/>
            <person name="Narusaka M."/>
            <person name="Seki M."/>
            <person name="Sakurai T."/>
            <person name="Satou M."/>
            <person name="Tamse R."/>
            <person name="Vaysberg M."/>
            <person name="Wallender E.K."/>
            <person name="Wong C."/>
            <person name="Yamamura Y."/>
            <person name="Yuan S."/>
            <person name="Shinozaki K."/>
            <person name="Davis R.W."/>
            <person name="Theologis A."/>
            <person name="Ecker J.R."/>
        </authorList>
    </citation>
    <scope>NUCLEOTIDE SEQUENCE [LARGE SCALE MRNA] (ISOFORM 2)</scope>
    <source>
        <strain>cv. Columbia</strain>
    </source>
</reference>
<reference key="4">
    <citation type="journal article" date="2006" name="Plant Physiol.">
        <title>Genome-wide analysis of the ERF gene family in Arabidopsis and rice.</title>
        <authorList>
            <person name="Nakano T."/>
            <person name="Suzuki K."/>
            <person name="Fujimura T."/>
            <person name="Shinshi H."/>
        </authorList>
    </citation>
    <scope>GENE FAMILY</scope>
    <scope>NOMENCLATURE</scope>
</reference>
<reference key="5">
    <citation type="journal article" date="2010" name="Plant J.">
        <title>HRE1 and HRE2, two hypoxia-inducible ethylene response factors, affect anaerobic responses in Arabidopsis thaliana.</title>
        <authorList>
            <person name="Licausi F."/>
            <person name="van Dongen J.T."/>
            <person name="Giuntoli B."/>
            <person name="Novi G."/>
            <person name="Santaniello A."/>
            <person name="Geigenberger P."/>
            <person name="Perata P."/>
        </authorList>
    </citation>
    <scope>FUNCTION</scope>
    <scope>SUBCELLULAR LOCATION</scope>
    <scope>INDUCTION BY HYPOXIA</scope>
</reference>
<reference key="6">
    <citation type="journal article" date="2011" name="Nature">
        <title>Homeostatic response to hypoxia is regulated by the N-end rule pathway in plants.</title>
        <authorList>
            <person name="Gibbs D.J."/>
            <person name="Lee S.C."/>
            <person name="Isa N.M."/>
            <person name="Gramuglia S."/>
            <person name="Fukao T."/>
            <person name="Bassel G.W."/>
            <person name="Correia C.S."/>
            <person name="Corbineau F."/>
            <person name="Theodoulou F.L."/>
            <person name="Bailey-Serres J."/>
            <person name="Holdsworth M.J."/>
        </authorList>
    </citation>
    <scope>OXIDATION AT CYS-2</scope>
</reference>
<reference key="7">
    <citation type="journal article" date="2011" name="Physiol. Plantarum">
        <title>The hypoxia responsive transcription factor genes ERF71/HRE2 and ERF73/HRE1 of Arabidopsis are differentially regulated by ethylene.</title>
        <authorList>
            <person name="Hess N."/>
            <person name="Klode M."/>
            <person name="Anders M."/>
            <person name="Sauter M."/>
        </authorList>
    </citation>
    <scope>FUNCTION</scope>
    <scope>INDUCTION BY HYPOXIA</scope>
</reference>
<reference key="8">
    <citation type="journal article" date="2011" name="Plant Physiol.">
        <title>The AP2/ERF transcription factor AtERF73/HRE1 modulates ethylene responses during hypoxia in Arabidopsis.</title>
        <authorList>
            <person name="Yang C.Y."/>
            <person name="Hsu F.C."/>
            <person name="Li J.P."/>
            <person name="Wang N.N."/>
            <person name="Shih M.C."/>
        </authorList>
    </citation>
    <scope>FUNCTION</scope>
    <scope>INDUCTION</scope>
</reference>
<reference key="9">
    <citation type="journal article" date="2014" name="Planta">
        <title>Hydrogen peroxide controls transcriptional responses of ERF73/HRE1 and ADH1 via modulation of ethylene signaling during hypoxic stress.</title>
        <authorList>
            <person name="Yang C.-Y."/>
        </authorList>
    </citation>
    <scope>INDUCTION</scope>
</reference>
<reference key="10">
    <citation type="journal article" date="2014" name="Plant Cell Rep.">
        <title>Arabidopsis HRE1alpha, a splicing variant of AtERF73/HRE1, functions as a nuclear transcription activator in hypoxia response and root development.</title>
        <authorList>
            <person name="Seok H.Y."/>
            <person name="Tarte V.N."/>
            <person name="Lee S.Y."/>
            <person name="Park H.Y."/>
            <person name="Moon Y.H."/>
        </authorList>
    </citation>
    <scope>FUNCTION</scope>
    <scope>ALTERNATIVE SPLICING</scope>
    <scope>TISSUE SPECIFICITY</scope>
    <scope>INDUCTION</scope>
</reference>
<reference key="11">
    <citation type="journal article" date="2017" name="Plant Physiol.">
        <title>Root bending is antagonistically affected by hypoxia and ERF-mediated transcription via auxin signaling.</title>
        <authorList>
            <person name="Eysholdt-Derzso E."/>
            <person name="Sauter M."/>
        </authorList>
    </citation>
    <scope>INDUCTION BY ETHYLENE</scope>
</reference>
<reference key="12">
    <citation type="journal article" date="2019" name="Ann. Bot.">
        <title>Nitrate nutrition influences multiple factors in order to increase energy efficiency under hypoxia in Arabidopsis.</title>
        <authorList>
            <person name="Wany A."/>
            <person name="Gupta A.K."/>
            <person name="Kumari A."/>
            <person name="Mishra S."/>
            <person name="Singh N."/>
            <person name="Pandey S."/>
            <person name="Vanvari R."/>
            <person name="Igamberdiev A.U."/>
            <person name="Fernie A.R."/>
            <person name="Gupta K.J."/>
        </authorList>
    </citation>
    <scope>INDUCTION BY HYPOXIA</scope>
</reference>
<reference key="13">
    <citation type="journal article" date="2020" name="Int. J. Mol. Sci.">
        <title>Two alternative splicing variants of AtERF73/HRE1, HRE1alpha and HRE1beta, have differential transactivation activities in Arabidopsis.</title>
        <authorList>
            <person name="Seok H.Y."/>
            <person name="Ha J."/>
            <person name="Lee S.Y."/>
            <person name="Bae H."/>
            <person name="Moon Y.H."/>
        </authorList>
    </citation>
    <scope>FUNCTION</scope>
    <scope>ALTERNATIVE SPLICING</scope>
    <scope>INDUCTION BY HYPOXIA</scope>
</reference>
<proteinExistence type="evidence at protein level"/>
<protein>
    <recommendedName>
        <fullName evidence="16">Ethylene-responsive transcription factor ERF073</fullName>
        <shortName evidence="13">AtERF73</shortName>
    </recommendedName>
    <alternativeName>
        <fullName evidence="12">Protein HYPOXIA RESPONSIVE ERF 1</fullName>
    </alternativeName>
</protein>
<sequence>MCGGAVISDYIAPEKIARSSGKSSWRSNGVFDCSIYDFDGNFDELESDEPFVFSSTHKHHASGSASDGKKKQSSRYKGIRRRPWGRWAAEIRDPIKGVRVWLGTFNTAEEAARAYDLEAKRIRGAKAKLNFPNESSGKRKAKAKTVQQVEENHEADLDVAVVSSAPSSSCLDFLWEENNPDTLLIDTQWLEDIIMGDANKKHEPNDSEEANNVDASLLSEELLAFENQTEYFSQMPFTEGNCDSSTSLSSLFDGGNDMGLWS</sequence>
<accession>Q8H0T5</accession>
<accession>F4IDA7</accession>
<accession>Q9C9D5</accession>
<gene>
    <name evidence="11" type="primary">ERF073</name>
    <name evidence="14" type="synonym">ERF73</name>
    <name evidence="12" type="synonym">HRE1</name>
    <name evidence="18" type="ordered locus">At1g72360</name>
    <name evidence="19" type="ORF">T10D10.17</name>
</gene>
<name>ERF73_ARATH</name>
<organism>
    <name type="scientific">Arabidopsis thaliana</name>
    <name type="common">Mouse-ear cress</name>
    <dbReference type="NCBI Taxonomy" id="3702"/>
    <lineage>
        <taxon>Eukaryota</taxon>
        <taxon>Viridiplantae</taxon>
        <taxon>Streptophyta</taxon>
        <taxon>Embryophyta</taxon>
        <taxon>Tracheophyta</taxon>
        <taxon>Spermatophyta</taxon>
        <taxon>Magnoliopsida</taxon>
        <taxon>eudicotyledons</taxon>
        <taxon>Gunneridae</taxon>
        <taxon>Pentapetalae</taxon>
        <taxon>rosids</taxon>
        <taxon>malvids</taxon>
        <taxon>Brassicales</taxon>
        <taxon>Brassicaceae</taxon>
        <taxon>Camelineae</taxon>
        <taxon>Arabidopsis</taxon>
    </lineage>
</organism>
<feature type="chain" id="PRO_0000290407" description="Ethylene-responsive transcription factor ERF073">
    <location>
        <begin position="1"/>
        <end position="262"/>
    </location>
</feature>
<feature type="DNA-binding region" description="AP2/ERF" evidence="1">
    <location>
        <begin position="75"/>
        <end position="132"/>
    </location>
</feature>
<feature type="region of interest" description="Disordered" evidence="2">
    <location>
        <begin position="56"/>
        <end position="79"/>
    </location>
</feature>
<feature type="modified residue" description="Cysteine sulfinic acid (-SO2H)" evidence="17">
    <location>
        <position position="2"/>
    </location>
</feature>
<feature type="splice variant" id="VSP_061101" description="In isoform 2.">
    <original>MCGGAVISDYIAPEKIARSSGKSSWRSNGVFDCSIYDFDGNFDELESDEPFVFSSTHKHHAS</original>
    <variation>MSQSFELYPWL</variation>
    <location>
        <begin position="1"/>
        <end position="62"/>
    </location>
</feature>